<comment type="function">
    <text evidence="1">F(1)F(0) ATP synthase produces ATP from ADP in the presence of a proton or sodium gradient. F-type ATPases consist of two structural domains, F(1) containing the extramembraneous catalytic core and F(0) containing the membrane proton channel, linked together by a central stalk and a peripheral stalk. During catalysis, ATP synthesis in the catalytic domain of F(1) is coupled via a rotary mechanism of the central stalk subunits to proton translocation.</text>
</comment>
<comment type="function">
    <text evidence="1">This protein is part of the stalk that links CF(0) to CF(1). It either transmits conformational changes from CF(0) to CF(1) or is implicated in proton conduction.</text>
</comment>
<comment type="subunit">
    <text evidence="1">F-type ATPases have 2 components, F(1) - the catalytic core - and F(0) - the membrane proton channel. F(1) has five subunits: alpha(3), beta(3), gamma(1), delta(1), epsilon(1). F(0) has three main subunits: a(1), b(2) and c(10-14). The alpha and beta chains form an alternating ring which encloses part of the gamma chain. F(1) is attached to F(0) by a central stalk formed by the gamma and epsilon chains, while a peripheral stalk is formed by the delta and b chains.</text>
</comment>
<comment type="subcellular location">
    <subcellularLocation>
        <location evidence="1">Cell membrane</location>
        <topology evidence="1">Peripheral membrane protein</topology>
    </subcellularLocation>
</comment>
<comment type="similarity">
    <text evidence="1">Belongs to the ATPase delta chain family.</text>
</comment>
<proteinExistence type="inferred from homology"/>
<organism>
    <name type="scientific">Ruminiclostridium cellulolyticum (strain ATCC 35319 / DSM 5812 / JCM 6584 / H10)</name>
    <name type="common">Clostridium cellulolyticum</name>
    <dbReference type="NCBI Taxonomy" id="394503"/>
    <lineage>
        <taxon>Bacteria</taxon>
        <taxon>Bacillati</taxon>
        <taxon>Bacillota</taxon>
        <taxon>Clostridia</taxon>
        <taxon>Eubacteriales</taxon>
        <taxon>Oscillospiraceae</taxon>
        <taxon>Ruminiclostridium</taxon>
    </lineage>
</organism>
<reference key="1">
    <citation type="submission" date="2009-01" db="EMBL/GenBank/DDBJ databases">
        <title>Complete sequence of Clostridium cellulolyticum H10.</title>
        <authorList>
            <consortium name="US DOE Joint Genome Institute"/>
            <person name="Lucas S."/>
            <person name="Copeland A."/>
            <person name="Lapidus A."/>
            <person name="Glavina del Rio T."/>
            <person name="Dalin E."/>
            <person name="Tice H."/>
            <person name="Bruce D."/>
            <person name="Goodwin L."/>
            <person name="Pitluck S."/>
            <person name="Chertkov O."/>
            <person name="Saunders E."/>
            <person name="Brettin T."/>
            <person name="Detter J.C."/>
            <person name="Han C."/>
            <person name="Larimer F."/>
            <person name="Land M."/>
            <person name="Hauser L."/>
            <person name="Kyrpides N."/>
            <person name="Ivanova N."/>
            <person name="Zhou J."/>
            <person name="Richardson P."/>
        </authorList>
    </citation>
    <scope>NUCLEOTIDE SEQUENCE [LARGE SCALE GENOMIC DNA]</scope>
    <source>
        <strain>ATCC 35319 / DSM 5812 / JCM 6584 / H10</strain>
    </source>
</reference>
<name>ATPD_RUMCH</name>
<gene>
    <name evidence="1" type="primary">atpH</name>
    <name type="ordered locus">Ccel_0269</name>
</gene>
<protein>
    <recommendedName>
        <fullName evidence="1">ATP synthase subunit delta</fullName>
    </recommendedName>
    <alternativeName>
        <fullName evidence="1">ATP synthase F(1) sector subunit delta</fullName>
    </alternativeName>
    <alternativeName>
        <fullName evidence="1">F-type ATPase subunit delta</fullName>
        <shortName evidence="1">F-ATPase subunit delta</shortName>
    </alternativeName>
</protein>
<sequence length="175" mass="19748">MPLVEKRYAQALLELSGSDINSIKEEFGDFTNLYNSDKDFRDFLNNPVVKTDKKQALIRSVFTDRLSKNMLNMILLLVSKHRTAEIPGIFNQFIQMANETANVLDMKIIMAAPMDEVQLETLREKFKKKYNAVAVNSTEIVDESLIGGLKVIIGDKVYDGSVKGRIESLTEIVSV</sequence>
<evidence type="ECO:0000255" key="1">
    <source>
        <dbReference type="HAMAP-Rule" id="MF_01416"/>
    </source>
</evidence>
<dbReference type="EMBL" id="CP001348">
    <property type="protein sequence ID" value="ACL74656.1"/>
    <property type="molecule type" value="Genomic_DNA"/>
</dbReference>
<dbReference type="RefSeq" id="WP_012634721.1">
    <property type="nucleotide sequence ID" value="NC_011898.1"/>
</dbReference>
<dbReference type="SMR" id="B8I576"/>
<dbReference type="STRING" id="394503.Ccel_0269"/>
<dbReference type="KEGG" id="cce:Ccel_0269"/>
<dbReference type="eggNOG" id="COG0712">
    <property type="taxonomic scope" value="Bacteria"/>
</dbReference>
<dbReference type="HOGENOM" id="CLU_085114_4_1_9"/>
<dbReference type="OrthoDB" id="9802471at2"/>
<dbReference type="Proteomes" id="UP000001349">
    <property type="component" value="Chromosome"/>
</dbReference>
<dbReference type="GO" id="GO:0005886">
    <property type="term" value="C:plasma membrane"/>
    <property type="evidence" value="ECO:0007669"/>
    <property type="project" value="UniProtKB-SubCell"/>
</dbReference>
<dbReference type="GO" id="GO:0045259">
    <property type="term" value="C:proton-transporting ATP synthase complex"/>
    <property type="evidence" value="ECO:0007669"/>
    <property type="project" value="UniProtKB-KW"/>
</dbReference>
<dbReference type="GO" id="GO:0046933">
    <property type="term" value="F:proton-transporting ATP synthase activity, rotational mechanism"/>
    <property type="evidence" value="ECO:0007669"/>
    <property type="project" value="UniProtKB-UniRule"/>
</dbReference>
<dbReference type="Gene3D" id="1.10.520.20">
    <property type="entry name" value="N-terminal domain of the delta subunit of the F1F0-ATP synthase"/>
    <property type="match status" value="1"/>
</dbReference>
<dbReference type="HAMAP" id="MF_01416">
    <property type="entry name" value="ATP_synth_delta_bact"/>
    <property type="match status" value="1"/>
</dbReference>
<dbReference type="InterPro" id="IPR026015">
    <property type="entry name" value="ATP_synth_OSCP/delta_N_sf"/>
</dbReference>
<dbReference type="InterPro" id="IPR000711">
    <property type="entry name" value="ATPase_OSCP/dsu"/>
</dbReference>
<dbReference type="NCBIfam" id="TIGR01145">
    <property type="entry name" value="ATP_synt_delta"/>
    <property type="match status" value="1"/>
</dbReference>
<dbReference type="PANTHER" id="PTHR11910">
    <property type="entry name" value="ATP SYNTHASE DELTA CHAIN"/>
    <property type="match status" value="1"/>
</dbReference>
<dbReference type="Pfam" id="PF00213">
    <property type="entry name" value="OSCP"/>
    <property type="match status" value="1"/>
</dbReference>
<dbReference type="PRINTS" id="PR00125">
    <property type="entry name" value="ATPASEDELTA"/>
</dbReference>
<dbReference type="SUPFAM" id="SSF47928">
    <property type="entry name" value="N-terminal domain of the delta subunit of the F1F0-ATP synthase"/>
    <property type="match status" value="1"/>
</dbReference>
<accession>B8I576</accession>
<feature type="chain" id="PRO_0000382086" description="ATP synthase subunit delta">
    <location>
        <begin position="1"/>
        <end position="175"/>
    </location>
</feature>
<keyword id="KW-0066">ATP synthesis</keyword>
<keyword id="KW-1003">Cell membrane</keyword>
<keyword id="KW-0139">CF(1)</keyword>
<keyword id="KW-0375">Hydrogen ion transport</keyword>
<keyword id="KW-0406">Ion transport</keyword>
<keyword id="KW-0472">Membrane</keyword>
<keyword id="KW-1185">Reference proteome</keyword>
<keyword id="KW-0813">Transport</keyword>